<organism>
    <name type="scientific">Rattus norvegicus</name>
    <name type="common">Rat</name>
    <dbReference type="NCBI Taxonomy" id="10116"/>
    <lineage>
        <taxon>Eukaryota</taxon>
        <taxon>Metazoa</taxon>
        <taxon>Chordata</taxon>
        <taxon>Craniata</taxon>
        <taxon>Vertebrata</taxon>
        <taxon>Euteleostomi</taxon>
        <taxon>Mammalia</taxon>
        <taxon>Eutheria</taxon>
        <taxon>Euarchontoglires</taxon>
        <taxon>Glires</taxon>
        <taxon>Rodentia</taxon>
        <taxon>Myomorpha</taxon>
        <taxon>Muroidea</taxon>
        <taxon>Muridae</taxon>
        <taxon>Murinae</taxon>
        <taxon>Rattus</taxon>
    </lineage>
</organism>
<name>V1R92_RAT</name>
<proteinExistence type="evidence at transcript level"/>
<comment type="function">
    <text evidence="1">Putative pheromone receptor implicated in the regulation of social as well as reproductive behavior.</text>
</comment>
<comment type="subcellular location">
    <subcellularLocation>
        <location evidence="4">Cell membrane</location>
        <topology evidence="2">Multi-pass membrane protein</topology>
    </subcellularLocation>
</comment>
<comment type="similarity">
    <text evidence="3">Belongs to the G-protein coupled receptor 1 family.</text>
</comment>
<comment type="caution">
    <text evidence="4">Was originally thought to originate from mouse (PubMed:9757043, Ref.1).</text>
</comment>
<keyword id="KW-1003">Cell membrane</keyword>
<keyword id="KW-1015">Disulfide bond</keyword>
<keyword id="KW-0297">G-protein coupled receptor</keyword>
<keyword id="KW-0325">Glycoprotein</keyword>
<keyword id="KW-0472">Membrane</keyword>
<keyword id="KW-0589">Pheromone response</keyword>
<keyword id="KW-0675">Receptor</keyword>
<keyword id="KW-1185">Reference proteome</keyword>
<keyword id="KW-0807">Transducer</keyword>
<keyword id="KW-0812">Transmembrane</keyword>
<keyword id="KW-1133">Transmembrane helix</keyword>
<dbReference type="EMBL" id="Y17567">
    <property type="protein sequence ID" value="CAB44236.1"/>
    <property type="molecule type" value="Genomic_DNA"/>
</dbReference>
<dbReference type="EMBL" id="AY510279">
    <property type="protein sequence ID" value="AAR87946.1"/>
    <property type="molecule type" value="mRNA"/>
</dbReference>
<dbReference type="RefSeq" id="NP_001406644.1">
    <property type="nucleotide sequence ID" value="NM_001419715.1"/>
</dbReference>
<dbReference type="SMR" id="Q5J3N1"/>
<dbReference type="STRING" id="10116.ENSRNOP00000069841"/>
<dbReference type="GlyCosmos" id="Q5J3N1">
    <property type="glycosylation" value="1 site, No reported glycans"/>
</dbReference>
<dbReference type="GlyGen" id="Q5J3N1">
    <property type="glycosylation" value="1 site"/>
</dbReference>
<dbReference type="iPTMnet" id="Q5J3N1"/>
<dbReference type="PhosphoSitePlus" id="Q5J3N1"/>
<dbReference type="PaxDb" id="10116-ENSRNOP00000063674"/>
<dbReference type="GeneID" id="494310"/>
<dbReference type="UCSC" id="RGD:1564573">
    <property type="organism name" value="rat"/>
</dbReference>
<dbReference type="AGR" id="RGD:1564573"/>
<dbReference type="RGD" id="1564573">
    <property type="gene designation" value="Vom1r92"/>
</dbReference>
<dbReference type="VEuPathDB" id="HostDB:ENSRNOG00000065051"/>
<dbReference type="eggNOG" id="ENOG502SNRJ">
    <property type="taxonomic scope" value="Eukaryota"/>
</dbReference>
<dbReference type="HOGENOM" id="CLU_058641_0_0_1"/>
<dbReference type="InParanoid" id="Q5J3N1"/>
<dbReference type="PhylomeDB" id="Q5J3N1"/>
<dbReference type="PRO" id="PR:Q5J3N1"/>
<dbReference type="Proteomes" id="UP000002494">
    <property type="component" value="Chromosome 4"/>
</dbReference>
<dbReference type="GO" id="GO:0005886">
    <property type="term" value="C:plasma membrane"/>
    <property type="evidence" value="ECO:0007669"/>
    <property type="project" value="UniProtKB-SubCell"/>
</dbReference>
<dbReference type="GO" id="GO:0016503">
    <property type="term" value="F:pheromone receptor activity"/>
    <property type="evidence" value="ECO:0007669"/>
    <property type="project" value="InterPro"/>
</dbReference>
<dbReference type="GO" id="GO:0019236">
    <property type="term" value="P:response to pheromone"/>
    <property type="evidence" value="ECO:0007669"/>
    <property type="project" value="UniProtKB-KW"/>
</dbReference>
<dbReference type="GO" id="GO:0007606">
    <property type="term" value="P:sensory perception of chemical stimulus"/>
    <property type="evidence" value="ECO:0007669"/>
    <property type="project" value="UniProtKB-ARBA"/>
</dbReference>
<dbReference type="CDD" id="cd13949">
    <property type="entry name" value="7tm_V1R_pheromone"/>
    <property type="match status" value="1"/>
</dbReference>
<dbReference type="FunFam" id="1.20.1070.10:FF:000051">
    <property type="entry name" value="Vomeronasal type-1 receptor"/>
    <property type="match status" value="1"/>
</dbReference>
<dbReference type="Gene3D" id="1.20.1070.10">
    <property type="entry name" value="Rhodopsin 7-helix transmembrane proteins"/>
    <property type="match status" value="1"/>
</dbReference>
<dbReference type="InterPro" id="IPR017452">
    <property type="entry name" value="GPCR_Rhodpsn_7TM"/>
</dbReference>
<dbReference type="InterPro" id="IPR004072">
    <property type="entry name" value="Vmron_rcpt_1"/>
</dbReference>
<dbReference type="PANTHER" id="PTHR24062">
    <property type="entry name" value="VOMERONASAL TYPE-1 RECEPTOR"/>
    <property type="match status" value="1"/>
</dbReference>
<dbReference type="Pfam" id="PF03402">
    <property type="entry name" value="V1R"/>
    <property type="match status" value="1"/>
</dbReference>
<dbReference type="PRINTS" id="PR01534">
    <property type="entry name" value="VOMERONASL1R"/>
</dbReference>
<dbReference type="SUPFAM" id="SSF81321">
    <property type="entry name" value="Family A G protein-coupled receptor-like"/>
    <property type="match status" value="1"/>
</dbReference>
<dbReference type="PROSITE" id="PS50262">
    <property type="entry name" value="G_PROTEIN_RECEP_F1_2"/>
    <property type="match status" value="1"/>
</dbReference>
<reference evidence="5" key="1">
    <citation type="submission" date="1999-06" db="EMBL/GenBank/DDBJ databases">
        <authorList>
            <person name="Mimmack M.L."/>
        </authorList>
    </citation>
    <scope>NUCLEOTIDE SEQUENCE [GENOMIC DNA]</scope>
</reference>
<reference evidence="5" key="2">
    <citation type="submission" date="2003-12" db="EMBL/GenBank/DDBJ databases">
        <title>Rat vomeronasal receptors.</title>
        <authorList>
            <person name="Capello L."/>
            <person name="Rodriguez I."/>
        </authorList>
    </citation>
    <scope>NUCLEOTIDE SEQUENCE [MRNA]</scope>
</reference>
<reference evidence="4" key="3">
    <citation type="journal article" date="1998" name="Brain Res. Mol. Brain Res.">
        <title>Isolation of mouse vomeronasal receptor genes and their co-localization with specific G-protein messenger RNAs.</title>
        <authorList>
            <person name="Saito H."/>
            <person name="Mimmack M.L."/>
            <person name="Keverne E.B."/>
            <person name="Kishimoto J."/>
            <person name="Emson P.C."/>
        </authorList>
    </citation>
    <scope>NUCLEOTIDE SEQUENCE [MRNA] OF 1-284</scope>
    <scope>PUTATIVE FUNCTION</scope>
</reference>
<sequence>MNKDNTLHTIMKITMFSEVSVGISANSILFFAHLCMLLGENRPKPFHLYIVSLSLTQLILLITMGLIAVDMFMSWGRWDSTPCQSLIYLHRLLRGFTLCAACLLNVFWMITLSPRSSCLSKFKHNSPHHISGAFLFLCVLYMSFSSHLLVSIIATPNLTSNIFMYVTQSCSLLPMSYSRTSTFSTTIAIREAFLISLMALSSGFMVTLLWRHKKQAQHLHSTSLSSKASPERRATRTILLLMSFFVVLYILENVVFYSRMKFKDGSMFYCVQIIVSHSYATISPFVFICTEKHMTKILRSVCTRIINI</sequence>
<feature type="chain" id="PRO_0000239978" description="Vomeronasal type-1 receptor 92">
    <location>
        <begin position="1"/>
        <end position="308"/>
    </location>
</feature>
<feature type="topological domain" description="Extracellular" evidence="2">
    <location>
        <begin position="1"/>
        <end position="18"/>
    </location>
</feature>
<feature type="transmembrane region" description="Helical; Name=1" evidence="2">
    <location>
        <begin position="19"/>
        <end position="39"/>
    </location>
</feature>
<feature type="topological domain" description="Cytoplasmic" evidence="2">
    <location>
        <begin position="40"/>
        <end position="48"/>
    </location>
</feature>
<feature type="transmembrane region" description="Helical; Name=2" evidence="2">
    <location>
        <begin position="49"/>
        <end position="69"/>
    </location>
</feature>
<feature type="topological domain" description="Extracellular" evidence="2">
    <location>
        <begin position="70"/>
        <end position="91"/>
    </location>
</feature>
<feature type="transmembrane region" description="Helical; Name=3" evidence="2">
    <location>
        <begin position="92"/>
        <end position="112"/>
    </location>
</feature>
<feature type="topological domain" description="Cytoplasmic" evidence="2">
    <location>
        <begin position="113"/>
        <end position="132"/>
    </location>
</feature>
<feature type="transmembrane region" description="Helical; Name=4" evidence="2">
    <location>
        <begin position="133"/>
        <end position="153"/>
    </location>
</feature>
<feature type="topological domain" description="Extracellular" evidence="2">
    <location>
        <begin position="154"/>
        <end position="188"/>
    </location>
</feature>
<feature type="transmembrane region" description="Helical; Name=5" evidence="2">
    <location>
        <begin position="189"/>
        <end position="209"/>
    </location>
</feature>
<feature type="topological domain" description="Cytoplasmic" evidence="2">
    <location>
        <begin position="210"/>
        <end position="236"/>
    </location>
</feature>
<feature type="transmembrane region" description="Helical; Name=6" evidence="2">
    <location>
        <begin position="237"/>
        <end position="257"/>
    </location>
</feature>
<feature type="topological domain" description="Extracellular" evidence="2">
    <location>
        <begin position="258"/>
        <end position="267"/>
    </location>
</feature>
<feature type="transmembrane region" description="Helical; Name=7" evidence="2">
    <location>
        <begin position="268"/>
        <end position="288"/>
    </location>
</feature>
<feature type="topological domain" description="Cytoplasmic" evidence="2">
    <location>
        <begin position="289"/>
        <end position="308"/>
    </location>
</feature>
<feature type="glycosylation site" description="N-linked (GlcNAc...) asparagine" evidence="2">
    <location>
        <position position="157"/>
    </location>
</feature>
<feature type="disulfide bond" evidence="3">
    <location>
        <begin position="83"/>
        <end position="170"/>
    </location>
</feature>
<feature type="sequence conflict" description="In Ref. 1; CAB44236." evidence="4" ref="1">
    <original>L</original>
    <variation>F</variation>
    <location>
        <position position="148"/>
    </location>
</feature>
<feature type="sequence conflict" description="In Ref. 1; CAB44236." evidence="4" ref="1">
    <original>T</original>
    <variation>P</variation>
    <location>
        <position position="185"/>
    </location>
</feature>
<evidence type="ECO:0000250" key="1">
    <source>
        <dbReference type="UniProtKB" id="Q8VIC6"/>
    </source>
</evidence>
<evidence type="ECO:0000255" key="2"/>
<evidence type="ECO:0000255" key="3">
    <source>
        <dbReference type="PROSITE-ProRule" id="PRU00521"/>
    </source>
</evidence>
<evidence type="ECO:0000305" key="4"/>
<evidence type="ECO:0000312" key="5">
    <source>
        <dbReference type="EMBL" id="CAB44236.1"/>
    </source>
</evidence>
<gene>
    <name type="primary">Vom1r92</name>
    <name type="synonym">V1rb6</name>
</gene>
<accession>Q5J3N1</accession>
<accession>Q9WUU3</accession>
<protein>
    <recommendedName>
        <fullName>Vomeronasal type-1 receptor 92</fullName>
    </recommendedName>
    <alternativeName>
        <fullName>M24 pheromone receptor</fullName>
    </alternativeName>
    <alternativeName>
        <fullName>Vomeronasal type-1 receptor B6</fullName>
    </alternativeName>
</protein>